<name>FTSH3_SPHTD</name>
<sequence>MNPRPVRPGGSLQQSLLALGSLSVAVGLAVWQQRTLGRGRSDSVTAVERPETTFSDVAGLIEAKEELAEIVTFLRDPERFRRMGARMPRGVLLAGPPGTGKTLLARAVAGEAGVPFFAMSASQFVEVYVGVGAKRVRDLFAAARKASPAIVFIDEIDAIGRRRGDSQSHQEYEQTLNQVLVELDGFHPRQAVVVIAATNRSDILDPALLRPGRFDRRVELSLPDRAERAAILRVHAQDKPLAPDVDLDALAARTVGLSGADLENTLNEAALLALRRGGDEITQADLEEAVDRVIAGPSRRSRALSARERETIAVHEAGHALVAHQLASADAPRRVTILGRGQMGGATVLAPDEDRRLWTRGQFLDRLAVLLGGYAAEEYRYGEVTTGSSGDLSQASALAQAMVTTYGMGKSLRGRAFDANGPVSDETSRAIDEEVSALVSEALELASRTIANAAHLLDALVAALLAEETLDEARLAAILGPRPARPAMN</sequence>
<protein>
    <recommendedName>
        <fullName evidence="1">ATP-dependent zinc metalloprotease FtsH 3</fullName>
        <ecNumber evidence="1">3.4.24.-</ecNumber>
    </recommendedName>
</protein>
<accession>D1C4U5</accession>
<proteinExistence type="inferred from homology"/>
<comment type="function">
    <text evidence="1">Acts as a processive, ATP-dependent zinc metallopeptidase for both cytoplasmic and membrane proteins. Plays a role in the quality control of integral membrane proteins.</text>
</comment>
<comment type="cofactor">
    <cofactor evidence="1">
        <name>Zn(2+)</name>
        <dbReference type="ChEBI" id="CHEBI:29105"/>
    </cofactor>
    <text evidence="1">Binds 1 zinc ion per subunit.</text>
</comment>
<comment type="subunit">
    <text evidence="1">Homohexamer.</text>
</comment>
<comment type="subcellular location">
    <subcellularLocation>
        <location evidence="1">Cell membrane</location>
        <topology evidence="1">Single-pass membrane protein</topology>
    </subcellularLocation>
</comment>
<comment type="similarity">
    <text evidence="1">In the central section; belongs to the AAA ATPase family.</text>
</comment>
<comment type="similarity">
    <text evidence="1">In the C-terminal section; belongs to the peptidase M41 family.</text>
</comment>
<organism>
    <name type="scientific">Sphaerobacter thermophilus (strain ATCC 49802 / DSM 20745 / KCCM 41009 / NCIMB 13125 / S 6022)</name>
    <dbReference type="NCBI Taxonomy" id="479434"/>
    <lineage>
        <taxon>Bacteria</taxon>
        <taxon>Pseudomonadati</taxon>
        <taxon>Thermomicrobiota</taxon>
        <taxon>Thermomicrobia</taxon>
        <taxon>Sphaerobacterales</taxon>
        <taxon>Sphaerobacterineae</taxon>
        <taxon>Sphaerobacteraceae</taxon>
        <taxon>Sphaerobacter</taxon>
    </lineage>
</organism>
<dbReference type="EC" id="3.4.24.-" evidence="1"/>
<dbReference type="EMBL" id="CP001823">
    <property type="protein sequence ID" value="ACZ39262.1"/>
    <property type="molecule type" value="Genomic_DNA"/>
</dbReference>
<dbReference type="RefSeq" id="WP_012872308.1">
    <property type="nucleotide sequence ID" value="NC_013523.1"/>
</dbReference>
<dbReference type="SMR" id="D1C4U5"/>
<dbReference type="STRING" id="479434.Sthe_1829"/>
<dbReference type="KEGG" id="sti:Sthe_1829"/>
<dbReference type="eggNOG" id="COG0465">
    <property type="taxonomic scope" value="Bacteria"/>
</dbReference>
<dbReference type="HOGENOM" id="CLU_000688_16_2_0"/>
<dbReference type="InParanoid" id="D1C4U5"/>
<dbReference type="OrthoDB" id="9809379at2"/>
<dbReference type="Proteomes" id="UP000002027">
    <property type="component" value="Chromosome 1"/>
</dbReference>
<dbReference type="GO" id="GO:0005886">
    <property type="term" value="C:plasma membrane"/>
    <property type="evidence" value="ECO:0007669"/>
    <property type="project" value="UniProtKB-SubCell"/>
</dbReference>
<dbReference type="GO" id="GO:0005524">
    <property type="term" value="F:ATP binding"/>
    <property type="evidence" value="ECO:0007669"/>
    <property type="project" value="UniProtKB-UniRule"/>
</dbReference>
<dbReference type="GO" id="GO:0016887">
    <property type="term" value="F:ATP hydrolysis activity"/>
    <property type="evidence" value="ECO:0007669"/>
    <property type="project" value="UniProtKB-UniRule"/>
</dbReference>
<dbReference type="GO" id="GO:0004176">
    <property type="term" value="F:ATP-dependent peptidase activity"/>
    <property type="evidence" value="ECO:0007669"/>
    <property type="project" value="InterPro"/>
</dbReference>
<dbReference type="GO" id="GO:0004222">
    <property type="term" value="F:metalloendopeptidase activity"/>
    <property type="evidence" value="ECO:0007669"/>
    <property type="project" value="InterPro"/>
</dbReference>
<dbReference type="GO" id="GO:0008270">
    <property type="term" value="F:zinc ion binding"/>
    <property type="evidence" value="ECO:0007669"/>
    <property type="project" value="UniProtKB-UniRule"/>
</dbReference>
<dbReference type="GO" id="GO:0030163">
    <property type="term" value="P:protein catabolic process"/>
    <property type="evidence" value="ECO:0007669"/>
    <property type="project" value="UniProtKB-UniRule"/>
</dbReference>
<dbReference type="GO" id="GO:0006508">
    <property type="term" value="P:proteolysis"/>
    <property type="evidence" value="ECO:0007669"/>
    <property type="project" value="UniProtKB-KW"/>
</dbReference>
<dbReference type="CDD" id="cd19501">
    <property type="entry name" value="RecA-like_FtsH"/>
    <property type="match status" value="1"/>
</dbReference>
<dbReference type="FunFam" id="1.10.8.60:FF:000001">
    <property type="entry name" value="ATP-dependent zinc metalloprotease FtsH"/>
    <property type="match status" value="1"/>
</dbReference>
<dbReference type="FunFam" id="3.40.50.300:FF:000001">
    <property type="entry name" value="ATP-dependent zinc metalloprotease FtsH"/>
    <property type="match status" value="1"/>
</dbReference>
<dbReference type="Gene3D" id="1.10.8.60">
    <property type="match status" value="1"/>
</dbReference>
<dbReference type="Gene3D" id="3.40.50.300">
    <property type="entry name" value="P-loop containing nucleotide triphosphate hydrolases"/>
    <property type="match status" value="1"/>
</dbReference>
<dbReference type="Gene3D" id="1.20.58.760">
    <property type="entry name" value="Peptidase M41"/>
    <property type="match status" value="1"/>
</dbReference>
<dbReference type="HAMAP" id="MF_01458">
    <property type="entry name" value="FtsH"/>
    <property type="match status" value="1"/>
</dbReference>
<dbReference type="InterPro" id="IPR003593">
    <property type="entry name" value="AAA+_ATPase"/>
</dbReference>
<dbReference type="InterPro" id="IPR041569">
    <property type="entry name" value="AAA_lid_3"/>
</dbReference>
<dbReference type="InterPro" id="IPR003959">
    <property type="entry name" value="ATPase_AAA_core"/>
</dbReference>
<dbReference type="InterPro" id="IPR003960">
    <property type="entry name" value="ATPase_AAA_CS"/>
</dbReference>
<dbReference type="InterPro" id="IPR005936">
    <property type="entry name" value="FtsH"/>
</dbReference>
<dbReference type="InterPro" id="IPR027417">
    <property type="entry name" value="P-loop_NTPase"/>
</dbReference>
<dbReference type="InterPro" id="IPR000642">
    <property type="entry name" value="Peptidase_M41"/>
</dbReference>
<dbReference type="InterPro" id="IPR037219">
    <property type="entry name" value="Peptidase_M41-like"/>
</dbReference>
<dbReference type="NCBIfam" id="TIGR01241">
    <property type="entry name" value="FtsH_fam"/>
    <property type="match status" value="1"/>
</dbReference>
<dbReference type="PANTHER" id="PTHR23076:SF97">
    <property type="entry name" value="ATP-DEPENDENT ZINC METALLOPROTEASE YME1L1"/>
    <property type="match status" value="1"/>
</dbReference>
<dbReference type="PANTHER" id="PTHR23076">
    <property type="entry name" value="METALLOPROTEASE M41 FTSH"/>
    <property type="match status" value="1"/>
</dbReference>
<dbReference type="Pfam" id="PF00004">
    <property type="entry name" value="AAA"/>
    <property type="match status" value="1"/>
</dbReference>
<dbReference type="Pfam" id="PF17862">
    <property type="entry name" value="AAA_lid_3"/>
    <property type="match status" value="1"/>
</dbReference>
<dbReference type="Pfam" id="PF01434">
    <property type="entry name" value="Peptidase_M41"/>
    <property type="match status" value="1"/>
</dbReference>
<dbReference type="SMART" id="SM00382">
    <property type="entry name" value="AAA"/>
    <property type="match status" value="1"/>
</dbReference>
<dbReference type="SUPFAM" id="SSF140990">
    <property type="entry name" value="FtsH protease domain-like"/>
    <property type="match status" value="1"/>
</dbReference>
<dbReference type="SUPFAM" id="SSF52540">
    <property type="entry name" value="P-loop containing nucleoside triphosphate hydrolases"/>
    <property type="match status" value="1"/>
</dbReference>
<dbReference type="PROSITE" id="PS00674">
    <property type="entry name" value="AAA"/>
    <property type="match status" value="1"/>
</dbReference>
<keyword id="KW-0067">ATP-binding</keyword>
<keyword id="KW-1003">Cell membrane</keyword>
<keyword id="KW-0378">Hydrolase</keyword>
<keyword id="KW-0472">Membrane</keyword>
<keyword id="KW-0479">Metal-binding</keyword>
<keyword id="KW-0482">Metalloprotease</keyword>
<keyword id="KW-0547">Nucleotide-binding</keyword>
<keyword id="KW-0645">Protease</keyword>
<keyword id="KW-1185">Reference proteome</keyword>
<keyword id="KW-0812">Transmembrane</keyword>
<keyword id="KW-1133">Transmembrane helix</keyword>
<keyword id="KW-0862">Zinc</keyword>
<feature type="chain" id="PRO_0000400396" description="ATP-dependent zinc metalloprotease FtsH 3">
    <location>
        <begin position="1"/>
        <end position="489"/>
    </location>
</feature>
<feature type="topological domain" description="Cytoplasmic" evidence="1">
    <location>
        <begin position="1"/>
        <end position="14"/>
    </location>
</feature>
<feature type="transmembrane region" description="Helical" evidence="1">
    <location>
        <begin position="15"/>
        <end position="31"/>
    </location>
</feature>
<feature type="topological domain" description="Extracellular" evidence="1">
    <location>
        <begin position="32"/>
        <end position="489"/>
    </location>
</feature>
<feature type="active site" evidence="1">
    <location>
        <position position="316"/>
    </location>
</feature>
<feature type="binding site" evidence="1">
    <location>
        <begin position="95"/>
        <end position="102"/>
    </location>
    <ligand>
        <name>ATP</name>
        <dbReference type="ChEBI" id="CHEBI:30616"/>
    </ligand>
</feature>
<feature type="binding site" evidence="1">
    <location>
        <position position="315"/>
    </location>
    <ligand>
        <name>Zn(2+)</name>
        <dbReference type="ChEBI" id="CHEBI:29105"/>
        <note>catalytic</note>
    </ligand>
</feature>
<feature type="binding site" evidence="1">
    <location>
        <position position="319"/>
    </location>
    <ligand>
        <name>Zn(2+)</name>
        <dbReference type="ChEBI" id="CHEBI:29105"/>
        <note>catalytic</note>
    </ligand>
</feature>
<feature type="binding site" evidence="1">
    <location>
        <position position="391"/>
    </location>
    <ligand>
        <name>Zn(2+)</name>
        <dbReference type="ChEBI" id="CHEBI:29105"/>
        <note>catalytic</note>
    </ligand>
</feature>
<reference key="1">
    <citation type="submission" date="2009-11" db="EMBL/GenBank/DDBJ databases">
        <title>The complete chromosome 1 of Sphaerobacter thermophilus DSM 20745.</title>
        <authorList>
            <person name="Lucas S."/>
            <person name="Copeland A."/>
            <person name="Lapidus A."/>
            <person name="Glavina del Rio T."/>
            <person name="Dalin E."/>
            <person name="Tice H."/>
            <person name="Bruce D."/>
            <person name="Goodwin L."/>
            <person name="Pitluck S."/>
            <person name="Kyrpides N."/>
            <person name="Mavromatis K."/>
            <person name="Ivanova N."/>
            <person name="Mikhailova N."/>
            <person name="LaButti K.M."/>
            <person name="Clum A."/>
            <person name="Sun H.I."/>
            <person name="Brettin T."/>
            <person name="Detter J.C."/>
            <person name="Han C."/>
            <person name="Larimer F."/>
            <person name="Land M."/>
            <person name="Hauser L."/>
            <person name="Markowitz V."/>
            <person name="Cheng J.F."/>
            <person name="Hugenholtz P."/>
            <person name="Woyke T."/>
            <person name="Wu D."/>
            <person name="Steenblock K."/>
            <person name="Schneider S."/>
            <person name="Pukall R."/>
            <person name="Goeker M."/>
            <person name="Klenk H.P."/>
            <person name="Eisen J.A."/>
        </authorList>
    </citation>
    <scope>NUCLEOTIDE SEQUENCE [LARGE SCALE GENOMIC DNA]</scope>
    <source>
        <strain>ATCC 49802 / DSM 20745 / KCCM 41009 / NCIMB 13125 / S 6022</strain>
    </source>
</reference>
<gene>
    <name evidence="1" type="primary">ftsH3</name>
    <name type="ordered locus">Sthe_1829</name>
</gene>
<evidence type="ECO:0000255" key="1">
    <source>
        <dbReference type="HAMAP-Rule" id="MF_01458"/>
    </source>
</evidence>